<name>LOLD_ECOUT</name>
<accession>Q1RD37</accession>
<organism>
    <name type="scientific">Escherichia coli (strain UTI89 / UPEC)</name>
    <dbReference type="NCBI Taxonomy" id="364106"/>
    <lineage>
        <taxon>Bacteria</taxon>
        <taxon>Pseudomonadati</taxon>
        <taxon>Pseudomonadota</taxon>
        <taxon>Gammaproteobacteria</taxon>
        <taxon>Enterobacterales</taxon>
        <taxon>Enterobacteriaceae</taxon>
        <taxon>Escherichia</taxon>
    </lineage>
</organism>
<feature type="chain" id="PRO_0000272083" description="Lipoprotein-releasing system ATP-binding protein LolD">
    <location>
        <begin position="1"/>
        <end position="233"/>
    </location>
</feature>
<feature type="domain" description="ABC transporter" evidence="1">
    <location>
        <begin position="6"/>
        <end position="233"/>
    </location>
</feature>
<feature type="binding site" evidence="1">
    <location>
        <begin position="42"/>
        <end position="49"/>
    </location>
    <ligand>
        <name>ATP</name>
        <dbReference type="ChEBI" id="CHEBI:30616"/>
    </ligand>
</feature>
<proteinExistence type="inferred from homology"/>
<reference key="1">
    <citation type="journal article" date="2006" name="Proc. Natl. Acad. Sci. U.S.A.">
        <title>Identification of genes subject to positive selection in uropathogenic strains of Escherichia coli: a comparative genomics approach.</title>
        <authorList>
            <person name="Chen S.L."/>
            <person name="Hung C.-S."/>
            <person name="Xu J."/>
            <person name="Reigstad C.S."/>
            <person name="Magrini V."/>
            <person name="Sabo A."/>
            <person name="Blasiar D."/>
            <person name="Bieri T."/>
            <person name="Meyer R.R."/>
            <person name="Ozersky P."/>
            <person name="Armstrong J.R."/>
            <person name="Fulton R.S."/>
            <person name="Latreille J.P."/>
            <person name="Spieth J."/>
            <person name="Hooton T.M."/>
            <person name="Mardis E.R."/>
            <person name="Hultgren S.J."/>
            <person name="Gordon J.I."/>
        </authorList>
    </citation>
    <scope>NUCLEOTIDE SEQUENCE [LARGE SCALE GENOMIC DNA]</scope>
    <source>
        <strain>UTI89 / UPEC</strain>
    </source>
</reference>
<sequence length="233" mass="25452">MNKILLQCDNLCKRYQEGSVQTDVLHNVSFSVGEGEMMAIVGSSGSGKSTLLHLLGGLDTPTSGDVIFNGQPMSKLSSAAKAELRNQKLGFIYQFHHLLPDFTALENVAMPLLIGKKKPAEINSRALEMLKAVGLEHRANHRPSELSGGERQRVAIARALVNNPRLVLADEPTGNLDARNADSIFQLLGELNRLQGTAFLVVTHDLQLAKRMSRQLEMRDGRLTAELSLMGAE</sequence>
<dbReference type="EC" id="7.6.2.-" evidence="1"/>
<dbReference type="EMBL" id="CP000243">
    <property type="protein sequence ID" value="ABE06727.1"/>
    <property type="molecule type" value="Genomic_DNA"/>
</dbReference>
<dbReference type="RefSeq" id="WP_001033695.1">
    <property type="nucleotide sequence ID" value="NZ_CP064825.1"/>
</dbReference>
<dbReference type="SMR" id="Q1RD37"/>
<dbReference type="GeneID" id="93776291"/>
<dbReference type="KEGG" id="eci:UTI89_C1245"/>
<dbReference type="HOGENOM" id="CLU_000604_1_22_6"/>
<dbReference type="Proteomes" id="UP000001952">
    <property type="component" value="Chromosome"/>
</dbReference>
<dbReference type="GO" id="GO:0005886">
    <property type="term" value="C:plasma membrane"/>
    <property type="evidence" value="ECO:0007669"/>
    <property type="project" value="UniProtKB-SubCell"/>
</dbReference>
<dbReference type="GO" id="GO:0005524">
    <property type="term" value="F:ATP binding"/>
    <property type="evidence" value="ECO:0007669"/>
    <property type="project" value="UniProtKB-KW"/>
</dbReference>
<dbReference type="GO" id="GO:0016887">
    <property type="term" value="F:ATP hydrolysis activity"/>
    <property type="evidence" value="ECO:0007669"/>
    <property type="project" value="InterPro"/>
</dbReference>
<dbReference type="GO" id="GO:0022857">
    <property type="term" value="F:transmembrane transporter activity"/>
    <property type="evidence" value="ECO:0007669"/>
    <property type="project" value="TreeGrafter"/>
</dbReference>
<dbReference type="GO" id="GO:0044874">
    <property type="term" value="P:lipoprotein localization to outer membrane"/>
    <property type="evidence" value="ECO:0007669"/>
    <property type="project" value="TreeGrafter"/>
</dbReference>
<dbReference type="GO" id="GO:0089705">
    <property type="term" value="P:protein localization to outer membrane"/>
    <property type="evidence" value="ECO:0007669"/>
    <property type="project" value="TreeGrafter"/>
</dbReference>
<dbReference type="CDD" id="cd03255">
    <property type="entry name" value="ABC_MJ0796_LolCDE_FtsE"/>
    <property type="match status" value="1"/>
</dbReference>
<dbReference type="FunFam" id="3.40.50.300:FF:000230">
    <property type="entry name" value="Lipoprotein-releasing system ATP-binding protein LolD"/>
    <property type="match status" value="1"/>
</dbReference>
<dbReference type="Gene3D" id="3.40.50.300">
    <property type="entry name" value="P-loop containing nucleotide triphosphate hydrolases"/>
    <property type="match status" value="1"/>
</dbReference>
<dbReference type="InterPro" id="IPR003593">
    <property type="entry name" value="AAA+_ATPase"/>
</dbReference>
<dbReference type="InterPro" id="IPR003439">
    <property type="entry name" value="ABC_transporter-like_ATP-bd"/>
</dbReference>
<dbReference type="InterPro" id="IPR017871">
    <property type="entry name" value="ABC_transporter-like_CS"/>
</dbReference>
<dbReference type="InterPro" id="IPR015854">
    <property type="entry name" value="ABC_transpr_LolD-like"/>
</dbReference>
<dbReference type="InterPro" id="IPR011924">
    <property type="entry name" value="LolD_lipo_ATP-bd"/>
</dbReference>
<dbReference type="InterPro" id="IPR017911">
    <property type="entry name" value="MacB-like_ATP-bd"/>
</dbReference>
<dbReference type="InterPro" id="IPR027417">
    <property type="entry name" value="P-loop_NTPase"/>
</dbReference>
<dbReference type="NCBIfam" id="TIGR02211">
    <property type="entry name" value="LolD_lipo_ex"/>
    <property type="match status" value="1"/>
</dbReference>
<dbReference type="NCBIfam" id="NF008639">
    <property type="entry name" value="PRK11629.1"/>
    <property type="match status" value="1"/>
</dbReference>
<dbReference type="PANTHER" id="PTHR24220">
    <property type="entry name" value="IMPORT ATP-BINDING PROTEIN"/>
    <property type="match status" value="1"/>
</dbReference>
<dbReference type="PANTHER" id="PTHR24220:SF689">
    <property type="entry name" value="LIPOPROTEIN-RELEASING SYSTEM ATP-BINDING PROTEIN LOLD"/>
    <property type="match status" value="1"/>
</dbReference>
<dbReference type="Pfam" id="PF00005">
    <property type="entry name" value="ABC_tran"/>
    <property type="match status" value="1"/>
</dbReference>
<dbReference type="SMART" id="SM00382">
    <property type="entry name" value="AAA"/>
    <property type="match status" value="1"/>
</dbReference>
<dbReference type="SUPFAM" id="SSF52540">
    <property type="entry name" value="P-loop containing nucleoside triphosphate hydrolases"/>
    <property type="match status" value="1"/>
</dbReference>
<dbReference type="PROSITE" id="PS00211">
    <property type="entry name" value="ABC_TRANSPORTER_1"/>
    <property type="match status" value="1"/>
</dbReference>
<dbReference type="PROSITE" id="PS50893">
    <property type="entry name" value="ABC_TRANSPORTER_2"/>
    <property type="match status" value="1"/>
</dbReference>
<dbReference type="PROSITE" id="PS51244">
    <property type="entry name" value="LOLD"/>
    <property type="match status" value="1"/>
</dbReference>
<keyword id="KW-0067">ATP-binding</keyword>
<keyword id="KW-0997">Cell inner membrane</keyword>
<keyword id="KW-1003">Cell membrane</keyword>
<keyword id="KW-0472">Membrane</keyword>
<keyword id="KW-0547">Nucleotide-binding</keyword>
<keyword id="KW-1278">Translocase</keyword>
<keyword id="KW-0813">Transport</keyword>
<gene>
    <name evidence="1" type="primary">lolD</name>
    <name type="ordered locus">UTI89_C1245</name>
</gene>
<evidence type="ECO:0000255" key="1">
    <source>
        <dbReference type="HAMAP-Rule" id="MF_01708"/>
    </source>
</evidence>
<comment type="function">
    <text evidence="1">Part of the ABC transporter complex LolCDE involved in the translocation of mature outer membrane-directed lipoproteins, from the inner membrane to the periplasmic chaperone, LolA. Responsible for the formation of the LolA-lipoprotein complex in an ATP-dependent manner.</text>
</comment>
<comment type="subunit">
    <text evidence="1">The complex is composed of two ATP-binding proteins (LolD) and two transmembrane proteins (LolC and LolE).</text>
</comment>
<comment type="subcellular location">
    <subcellularLocation>
        <location evidence="1">Cell inner membrane</location>
        <topology evidence="1">Peripheral membrane protein</topology>
    </subcellularLocation>
</comment>
<comment type="similarity">
    <text evidence="1">Belongs to the ABC transporter superfamily. Lipoprotein translocase (TC 3.A.1.125) family.</text>
</comment>
<protein>
    <recommendedName>
        <fullName evidence="1">Lipoprotein-releasing system ATP-binding protein LolD</fullName>
        <ecNumber evidence="1">7.6.2.-</ecNumber>
    </recommendedName>
</protein>